<feature type="chain" id="PRO_0000320511" description="Biogenesis of lysosome-related organelles complex 1 subunit VAB2">
    <location>
        <begin position="1"/>
        <end position="325"/>
    </location>
</feature>
<feature type="coiled-coil region" evidence="2">
    <location>
        <begin position="70"/>
        <end position="135"/>
    </location>
</feature>
<reference key="1">
    <citation type="journal article" date="2004" name="Science">
        <title>The Ashbya gossypii genome as a tool for mapping the ancient Saccharomyces cerevisiae genome.</title>
        <authorList>
            <person name="Dietrich F.S."/>
            <person name="Voegeli S."/>
            <person name="Brachat S."/>
            <person name="Lerch A."/>
            <person name="Gates K."/>
            <person name="Steiner S."/>
            <person name="Mohr C."/>
            <person name="Poehlmann R."/>
            <person name="Luedi P."/>
            <person name="Choi S."/>
            <person name="Wing R.A."/>
            <person name="Flavier A."/>
            <person name="Gaffney T.D."/>
            <person name="Philippsen P."/>
        </authorList>
    </citation>
    <scope>NUCLEOTIDE SEQUENCE [LARGE SCALE GENOMIC DNA]</scope>
    <source>
        <strain>ATCC 10895 / CBS 109.51 / FGSC 9923 / NRRL Y-1056</strain>
    </source>
</reference>
<reference key="2">
    <citation type="journal article" date="2013" name="G3 (Bethesda)">
        <title>Genomes of Ashbya fungi isolated from insects reveal four mating-type loci, numerous translocations, lack of transposons, and distinct gene duplications.</title>
        <authorList>
            <person name="Dietrich F.S."/>
            <person name="Voegeli S."/>
            <person name="Kuo S."/>
            <person name="Philippsen P."/>
        </authorList>
    </citation>
    <scope>GENOME REANNOTATION</scope>
    <source>
        <strain>ATCC 10895 / CBS 109.51 / FGSC 9923 / NRRL Y-1056</strain>
    </source>
</reference>
<comment type="function">
    <text evidence="1">Component of the biogenesis of lysosome-related organelles complex-1 (BLOC-1) involved in endosomal cargo sorting.</text>
</comment>
<comment type="subunit">
    <text evidence="1">Component of the biogenesis of lysosome-related organelles complex-1 (BLOC-1) composed of at least BLI1, BLS1, CNL1, KXD1, SNN1 and VAB2.</text>
</comment>
<comment type="subcellular location">
    <subcellularLocation>
        <location evidence="1">Cytoplasmic vesicle</location>
    </subcellularLocation>
    <subcellularLocation>
        <location evidence="1">Vacuole</location>
    </subcellularLocation>
    <subcellularLocation>
        <location evidence="1">Cytoplasm</location>
    </subcellularLocation>
</comment>
<comment type="similarity">
    <text evidence="3">Belongs to the VAB2 family.</text>
</comment>
<gene>
    <name type="primary">VAB2</name>
    <name type="ordered locus">ADL005C</name>
</gene>
<sequence length="325" mass="36420">MSFLFSGELRSPKNASTERFVSVRGSDAYKELCSLGMLPSSKDLRQDSIFRAVANEVKQVKQDVVEINSRVVAEVQVEKELAEHLNQKLKASEYKVDHLAKKLVRLRQKHSTNTQRQVRKLDDCIGDFESNIRELHGTVAEMVDRLGSVDMGLPEKERLIGDHQLNARHYPLLYELFRDKFPSKFGAPRGLGIASSLPERAFPKALGESDTGDLSHHDVATREAPPLEMDSAEEGCFYHPQNLAVDHIRNHFMNSRSSDINERELEISGSAHATKASSARENIPERILMPQFQKVASPQTAPTLENIEVTVPFSSKSAGHERHSG</sequence>
<organism>
    <name type="scientific">Eremothecium gossypii (strain ATCC 10895 / CBS 109.51 / FGSC 9923 / NRRL Y-1056)</name>
    <name type="common">Yeast</name>
    <name type="synonym">Ashbya gossypii</name>
    <dbReference type="NCBI Taxonomy" id="284811"/>
    <lineage>
        <taxon>Eukaryota</taxon>
        <taxon>Fungi</taxon>
        <taxon>Dikarya</taxon>
        <taxon>Ascomycota</taxon>
        <taxon>Saccharomycotina</taxon>
        <taxon>Saccharomycetes</taxon>
        <taxon>Saccharomycetales</taxon>
        <taxon>Saccharomycetaceae</taxon>
        <taxon>Eremothecium</taxon>
    </lineage>
</organism>
<proteinExistence type="inferred from homology"/>
<evidence type="ECO:0000250" key="1"/>
<evidence type="ECO:0000255" key="2"/>
<evidence type="ECO:0000305" key="3"/>
<accession>Q75AC2</accession>
<dbReference type="EMBL" id="AE016817">
    <property type="protein sequence ID" value="AAS51916.1"/>
    <property type="molecule type" value="Genomic_DNA"/>
</dbReference>
<dbReference type="RefSeq" id="NP_984092.1">
    <property type="nucleotide sequence ID" value="NM_209445.1"/>
</dbReference>
<dbReference type="SMR" id="Q75AC2"/>
<dbReference type="FunCoup" id="Q75AC2">
    <property type="interactions" value="37"/>
</dbReference>
<dbReference type="STRING" id="284811.Q75AC2"/>
<dbReference type="EnsemblFungi" id="AAS51916">
    <property type="protein sequence ID" value="AAS51916"/>
    <property type="gene ID" value="AGOS_ADL005C"/>
</dbReference>
<dbReference type="GeneID" id="4620240"/>
<dbReference type="KEGG" id="ago:AGOS_ADL005C"/>
<dbReference type="eggNOG" id="ENOG502S95F">
    <property type="taxonomic scope" value="Eukaryota"/>
</dbReference>
<dbReference type="HOGENOM" id="CLU_855219_0_0_1"/>
<dbReference type="InParanoid" id="Q75AC2"/>
<dbReference type="OMA" id="YKHENNT"/>
<dbReference type="OrthoDB" id="4036527at2759"/>
<dbReference type="Proteomes" id="UP000000591">
    <property type="component" value="Chromosome IV"/>
</dbReference>
<dbReference type="GO" id="GO:0031410">
    <property type="term" value="C:cytoplasmic vesicle"/>
    <property type="evidence" value="ECO:0007669"/>
    <property type="project" value="UniProtKB-KW"/>
</dbReference>
<dbReference type="GO" id="GO:0005773">
    <property type="term" value="C:vacuole"/>
    <property type="evidence" value="ECO:0007669"/>
    <property type="project" value="UniProtKB-SubCell"/>
</dbReference>
<keyword id="KW-0175">Coiled coil</keyword>
<keyword id="KW-0963">Cytoplasm</keyword>
<keyword id="KW-0968">Cytoplasmic vesicle</keyword>
<keyword id="KW-1185">Reference proteome</keyword>
<keyword id="KW-0813">Transport</keyword>
<keyword id="KW-0926">Vacuole</keyword>
<protein>
    <recommendedName>
        <fullName>Biogenesis of lysosome-related organelles complex 1 subunit VAB2</fullName>
        <shortName>BLOC-1 subunit VAB2</shortName>
    </recommendedName>
</protein>
<name>VAB2_EREGS</name>